<proteinExistence type="inferred from homology"/>
<gene>
    <name evidence="1" type="primary">rplK</name>
    <name type="ordered locus">SPG_0574</name>
</gene>
<protein>
    <recommendedName>
        <fullName evidence="1">Large ribosomal subunit protein uL11</fullName>
    </recommendedName>
    <alternativeName>
        <fullName evidence="2">50S ribosomal protein L11</fullName>
    </alternativeName>
</protein>
<reference key="1">
    <citation type="journal article" date="2001" name="Microb. Drug Resist.">
        <title>Annotated draft genomic sequence from a Streptococcus pneumoniae type 19F clinical isolate.</title>
        <authorList>
            <person name="Dopazo J."/>
            <person name="Mendoza A."/>
            <person name="Herrero J."/>
            <person name="Caldara F."/>
            <person name="Humbert Y."/>
            <person name="Friedli L."/>
            <person name="Guerrier M."/>
            <person name="Grand-Schenk E."/>
            <person name="Gandin C."/>
            <person name="de Francesco M."/>
            <person name="Polissi A."/>
            <person name="Buell G."/>
            <person name="Feger G."/>
            <person name="Garcia E."/>
            <person name="Peitsch M."/>
            <person name="Garcia-Bustos J.F."/>
        </authorList>
    </citation>
    <scope>NUCLEOTIDE SEQUENCE [LARGE SCALE GENOMIC DNA]</scope>
    <source>
        <strain>G54</strain>
    </source>
</reference>
<reference key="2">
    <citation type="submission" date="2008-03" db="EMBL/GenBank/DDBJ databases">
        <title>Pneumococcal beta glucoside metabolism investigated by whole genome comparison.</title>
        <authorList>
            <person name="Mulas L."/>
            <person name="Trappetti C."/>
            <person name="Hakenbeck R."/>
            <person name="Iannelli F."/>
            <person name="Pozzi G."/>
            <person name="Davidsen T.M."/>
            <person name="Tettelin H."/>
            <person name="Oggioni M."/>
        </authorList>
    </citation>
    <scope>NUCLEOTIDE SEQUENCE [LARGE SCALE GENOMIC DNA]</scope>
    <source>
        <strain>G54</strain>
    </source>
</reference>
<dbReference type="EMBL" id="CP001015">
    <property type="protein sequence ID" value="ACF56750.1"/>
    <property type="molecule type" value="Genomic_DNA"/>
</dbReference>
<dbReference type="SMR" id="B5E2M5"/>
<dbReference type="KEGG" id="spx:SPG_0574"/>
<dbReference type="HOGENOM" id="CLU_074237_2_1_9"/>
<dbReference type="GO" id="GO:0022625">
    <property type="term" value="C:cytosolic large ribosomal subunit"/>
    <property type="evidence" value="ECO:0007669"/>
    <property type="project" value="TreeGrafter"/>
</dbReference>
<dbReference type="GO" id="GO:0070180">
    <property type="term" value="F:large ribosomal subunit rRNA binding"/>
    <property type="evidence" value="ECO:0007669"/>
    <property type="project" value="UniProtKB-UniRule"/>
</dbReference>
<dbReference type="GO" id="GO:0003735">
    <property type="term" value="F:structural constituent of ribosome"/>
    <property type="evidence" value="ECO:0007669"/>
    <property type="project" value="InterPro"/>
</dbReference>
<dbReference type="GO" id="GO:0006412">
    <property type="term" value="P:translation"/>
    <property type="evidence" value="ECO:0007669"/>
    <property type="project" value="UniProtKB-UniRule"/>
</dbReference>
<dbReference type="CDD" id="cd00349">
    <property type="entry name" value="Ribosomal_L11"/>
    <property type="match status" value="1"/>
</dbReference>
<dbReference type="FunFam" id="1.10.10.250:FF:000001">
    <property type="entry name" value="50S ribosomal protein L11"/>
    <property type="match status" value="1"/>
</dbReference>
<dbReference type="FunFam" id="3.30.1550.10:FF:000001">
    <property type="entry name" value="50S ribosomal protein L11"/>
    <property type="match status" value="1"/>
</dbReference>
<dbReference type="Gene3D" id="1.10.10.250">
    <property type="entry name" value="Ribosomal protein L11, C-terminal domain"/>
    <property type="match status" value="1"/>
</dbReference>
<dbReference type="Gene3D" id="3.30.1550.10">
    <property type="entry name" value="Ribosomal protein L11/L12, N-terminal domain"/>
    <property type="match status" value="1"/>
</dbReference>
<dbReference type="HAMAP" id="MF_00736">
    <property type="entry name" value="Ribosomal_uL11"/>
    <property type="match status" value="1"/>
</dbReference>
<dbReference type="InterPro" id="IPR000911">
    <property type="entry name" value="Ribosomal_uL11"/>
</dbReference>
<dbReference type="InterPro" id="IPR006519">
    <property type="entry name" value="Ribosomal_uL11_bac-typ"/>
</dbReference>
<dbReference type="InterPro" id="IPR020783">
    <property type="entry name" value="Ribosomal_uL11_C"/>
</dbReference>
<dbReference type="InterPro" id="IPR036769">
    <property type="entry name" value="Ribosomal_uL11_C_sf"/>
</dbReference>
<dbReference type="InterPro" id="IPR020785">
    <property type="entry name" value="Ribosomal_uL11_CS"/>
</dbReference>
<dbReference type="InterPro" id="IPR020784">
    <property type="entry name" value="Ribosomal_uL11_N"/>
</dbReference>
<dbReference type="InterPro" id="IPR036796">
    <property type="entry name" value="Ribosomal_uL11_N_sf"/>
</dbReference>
<dbReference type="NCBIfam" id="TIGR01632">
    <property type="entry name" value="L11_bact"/>
    <property type="match status" value="1"/>
</dbReference>
<dbReference type="PANTHER" id="PTHR11661">
    <property type="entry name" value="60S RIBOSOMAL PROTEIN L12"/>
    <property type="match status" value="1"/>
</dbReference>
<dbReference type="PANTHER" id="PTHR11661:SF1">
    <property type="entry name" value="LARGE RIBOSOMAL SUBUNIT PROTEIN UL11M"/>
    <property type="match status" value="1"/>
</dbReference>
<dbReference type="Pfam" id="PF00298">
    <property type="entry name" value="Ribosomal_L11"/>
    <property type="match status" value="1"/>
</dbReference>
<dbReference type="Pfam" id="PF03946">
    <property type="entry name" value="Ribosomal_L11_N"/>
    <property type="match status" value="1"/>
</dbReference>
<dbReference type="SMART" id="SM00649">
    <property type="entry name" value="RL11"/>
    <property type="match status" value="1"/>
</dbReference>
<dbReference type="SUPFAM" id="SSF54747">
    <property type="entry name" value="Ribosomal L11/L12e N-terminal domain"/>
    <property type="match status" value="1"/>
</dbReference>
<dbReference type="SUPFAM" id="SSF46906">
    <property type="entry name" value="Ribosomal protein L11, C-terminal domain"/>
    <property type="match status" value="1"/>
</dbReference>
<dbReference type="PROSITE" id="PS00359">
    <property type="entry name" value="RIBOSOMAL_L11"/>
    <property type="match status" value="1"/>
</dbReference>
<comment type="function">
    <text evidence="1">Forms part of the ribosomal stalk which helps the ribosome interact with GTP-bound translation factors.</text>
</comment>
<comment type="subunit">
    <text evidence="1">Part of the ribosomal stalk of the 50S ribosomal subunit. Interacts with L10 and the large rRNA to form the base of the stalk. L10 forms an elongated spine to which L12 dimers bind in a sequential fashion forming a multimeric L10(L12)X complex.</text>
</comment>
<comment type="PTM">
    <text evidence="1">One or more lysine residues are methylated.</text>
</comment>
<comment type="similarity">
    <text evidence="1">Belongs to the universal ribosomal protein uL11 family.</text>
</comment>
<keyword id="KW-0488">Methylation</keyword>
<keyword id="KW-0687">Ribonucleoprotein</keyword>
<keyword id="KW-0689">Ribosomal protein</keyword>
<keyword id="KW-0694">RNA-binding</keyword>
<keyword id="KW-0699">rRNA-binding</keyword>
<evidence type="ECO:0000255" key="1">
    <source>
        <dbReference type="HAMAP-Rule" id="MF_00736"/>
    </source>
</evidence>
<evidence type="ECO:0000305" key="2"/>
<sequence>MAKKVEKLVKLQIPAGKATPAPPVGPALGQAGINIMGFTKEFNARTADQAGMIIPVVISVYEDKSFTFVTKTPPAAVLLKKAAGVEKGSGTPNKTKVATVTRAQVQEIAETKMPDLNAANVESAMRMIEGTARSMGFTVVD</sequence>
<accession>B5E2M5</accession>
<name>RL11_STRP4</name>
<organism>
    <name type="scientific">Streptococcus pneumoniae serotype 19F (strain G54)</name>
    <dbReference type="NCBI Taxonomy" id="512566"/>
    <lineage>
        <taxon>Bacteria</taxon>
        <taxon>Bacillati</taxon>
        <taxon>Bacillota</taxon>
        <taxon>Bacilli</taxon>
        <taxon>Lactobacillales</taxon>
        <taxon>Streptococcaceae</taxon>
        <taxon>Streptococcus</taxon>
    </lineage>
</organism>
<feature type="chain" id="PRO_1000195729" description="Large ribosomal subunit protein uL11">
    <location>
        <begin position="1"/>
        <end position="141"/>
    </location>
</feature>